<evidence type="ECO:0000255" key="1">
    <source>
        <dbReference type="HAMAP-Rule" id="MF_01151"/>
    </source>
</evidence>
<evidence type="ECO:0000256" key="2">
    <source>
        <dbReference type="SAM" id="MobiDB-lite"/>
    </source>
</evidence>
<organism>
    <name type="scientific">Escherichia coli O139:H28 (strain E24377A / ETEC)</name>
    <dbReference type="NCBI Taxonomy" id="331111"/>
    <lineage>
        <taxon>Bacteria</taxon>
        <taxon>Pseudomonadati</taxon>
        <taxon>Pseudomonadota</taxon>
        <taxon>Gammaproteobacteria</taxon>
        <taxon>Enterobacterales</taxon>
        <taxon>Enterobacteriaceae</taxon>
        <taxon>Escherichia</taxon>
    </lineage>
</organism>
<dbReference type="EMBL" id="CP000800">
    <property type="protein sequence ID" value="ABV20707.1"/>
    <property type="molecule type" value="Genomic_DNA"/>
</dbReference>
<dbReference type="RefSeq" id="WP_001300112.1">
    <property type="nucleotide sequence ID" value="NC_009801.1"/>
</dbReference>
<dbReference type="SMR" id="A7ZQ54"/>
<dbReference type="GeneID" id="75205875"/>
<dbReference type="KEGG" id="ecw:EcE24377A_2898"/>
<dbReference type="HOGENOM" id="CLU_057217_6_0_6"/>
<dbReference type="Proteomes" id="UP000001122">
    <property type="component" value="Chromosome"/>
</dbReference>
<dbReference type="GO" id="GO:0005829">
    <property type="term" value="C:cytosol"/>
    <property type="evidence" value="ECO:0007669"/>
    <property type="project" value="TreeGrafter"/>
</dbReference>
<dbReference type="GO" id="GO:0000774">
    <property type="term" value="F:adenyl-nucleotide exchange factor activity"/>
    <property type="evidence" value="ECO:0007669"/>
    <property type="project" value="InterPro"/>
</dbReference>
<dbReference type="GO" id="GO:0042803">
    <property type="term" value="F:protein homodimerization activity"/>
    <property type="evidence" value="ECO:0007669"/>
    <property type="project" value="InterPro"/>
</dbReference>
<dbReference type="GO" id="GO:0051087">
    <property type="term" value="F:protein-folding chaperone binding"/>
    <property type="evidence" value="ECO:0007669"/>
    <property type="project" value="InterPro"/>
</dbReference>
<dbReference type="GO" id="GO:0051082">
    <property type="term" value="F:unfolded protein binding"/>
    <property type="evidence" value="ECO:0007669"/>
    <property type="project" value="TreeGrafter"/>
</dbReference>
<dbReference type="GO" id="GO:0006457">
    <property type="term" value="P:protein folding"/>
    <property type="evidence" value="ECO:0007669"/>
    <property type="project" value="InterPro"/>
</dbReference>
<dbReference type="CDD" id="cd00446">
    <property type="entry name" value="GrpE"/>
    <property type="match status" value="1"/>
</dbReference>
<dbReference type="FunFam" id="2.30.22.10:FF:000001">
    <property type="entry name" value="Protein GrpE"/>
    <property type="match status" value="1"/>
</dbReference>
<dbReference type="FunFam" id="3.90.20.20:FF:000001">
    <property type="entry name" value="Protein GrpE"/>
    <property type="match status" value="1"/>
</dbReference>
<dbReference type="Gene3D" id="3.90.20.20">
    <property type="match status" value="1"/>
</dbReference>
<dbReference type="Gene3D" id="2.30.22.10">
    <property type="entry name" value="Head domain of nucleotide exchange factor GrpE"/>
    <property type="match status" value="1"/>
</dbReference>
<dbReference type="HAMAP" id="MF_01151">
    <property type="entry name" value="GrpE"/>
    <property type="match status" value="1"/>
</dbReference>
<dbReference type="InterPro" id="IPR000740">
    <property type="entry name" value="GrpE"/>
</dbReference>
<dbReference type="InterPro" id="IPR013805">
    <property type="entry name" value="GrpE_coiled_coil"/>
</dbReference>
<dbReference type="InterPro" id="IPR009012">
    <property type="entry name" value="GrpE_head"/>
</dbReference>
<dbReference type="NCBIfam" id="NF007655">
    <property type="entry name" value="PRK10325.1"/>
    <property type="match status" value="1"/>
</dbReference>
<dbReference type="NCBIfam" id="NF010738">
    <property type="entry name" value="PRK14140.1"/>
    <property type="match status" value="1"/>
</dbReference>
<dbReference type="NCBIfam" id="NF010748">
    <property type="entry name" value="PRK14150.1"/>
    <property type="match status" value="1"/>
</dbReference>
<dbReference type="PANTHER" id="PTHR21237">
    <property type="entry name" value="GRPE PROTEIN"/>
    <property type="match status" value="1"/>
</dbReference>
<dbReference type="PANTHER" id="PTHR21237:SF23">
    <property type="entry name" value="GRPE PROTEIN HOMOLOG, MITOCHONDRIAL"/>
    <property type="match status" value="1"/>
</dbReference>
<dbReference type="Pfam" id="PF01025">
    <property type="entry name" value="GrpE"/>
    <property type="match status" value="1"/>
</dbReference>
<dbReference type="PRINTS" id="PR00773">
    <property type="entry name" value="GRPEPROTEIN"/>
</dbReference>
<dbReference type="SUPFAM" id="SSF58014">
    <property type="entry name" value="Coiled-coil domain of nucleotide exchange factor GrpE"/>
    <property type="match status" value="1"/>
</dbReference>
<dbReference type="SUPFAM" id="SSF51064">
    <property type="entry name" value="Head domain of nucleotide exchange factor GrpE"/>
    <property type="match status" value="1"/>
</dbReference>
<dbReference type="PROSITE" id="PS01071">
    <property type="entry name" value="GRPE"/>
    <property type="match status" value="1"/>
</dbReference>
<accession>A7ZQ54</accession>
<comment type="function">
    <text evidence="1">Participates actively in the response to hyperosmotic and heat shock by preventing the aggregation of stress-denatured proteins, in association with DnaK and GrpE. It is the nucleotide exchange factor for DnaK and may function as a thermosensor. Unfolded proteins bind initially to DnaJ; upon interaction with the DnaJ-bound protein, DnaK hydrolyzes its bound ATP, resulting in the formation of a stable complex. GrpE releases ADP from DnaK; ATP binding to DnaK triggers the release of the substrate protein, thus completing the reaction cycle. Several rounds of ATP-dependent interactions between DnaJ, DnaK and GrpE are required for fully efficient folding.</text>
</comment>
<comment type="subunit">
    <text evidence="1">Homodimer.</text>
</comment>
<comment type="subcellular location">
    <subcellularLocation>
        <location evidence="1">Cytoplasm</location>
    </subcellularLocation>
</comment>
<comment type="similarity">
    <text evidence="1">Belongs to the GrpE family.</text>
</comment>
<gene>
    <name evidence="1" type="primary">grpE</name>
    <name type="ordered locus">EcE24377A_2898</name>
</gene>
<sequence>MSSKEQKTPEGQAPEEIIMDQHEEIEAVEPEASAEQVDPRDEKIANLEAQLAEAQTRERDGILRVKAEMENLRRRTELDIEKAHKFALEKFINELLPVIDSLDRALEVADKANPDMSAMVEGIELTLKSMLDVVRKFGVEVIAETNVPLDPNVHQAIAMVESDDVAPGNVLGIMQKGYTLNGRTIRAAMVTVAKAK</sequence>
<protein>
    <recommendedName>
        <fullName evidence="1">Protein GrpE</fullName>
    </recommendedName>
    <alternativeName>
        <fullName evidence="1">HSP-70 cofactor</fullName>
    </alternativeName>
</protein>
<reference key="1">
    <citation type="journal article" date="2008" name="J. Bacteriol.">
        <title>The pangenome structure of Escherichia coli: comparative genomic analysis of E. coli commensal and pathogenic isolates.</title>
        <authorList>
            <person name="Rasko D.A."/>
            <person name="Rosovitz M.J."/>
            <person name="Myers G.S.A."/>
            <person name="Mongodin E.F."/>
            <person name="Fricke W.F."/>
            <person name="Gajer P."/>
            <person name="Crabtree J."/>
            <person name="Sebaihia M."/>
            <person name="Thomson N.R."/>
            <person name="Chaudhuri R."/>
            <person name="Henderson I.R."/>
            <person name="Sperandio V."/>
            <person name="Ravel J."/>
        </authorList>
    </citation>
    <scope>NUCLEOTIDE SEQUENCE [LARGE SCALE GENOMIC DNA]</scope>
    <source>
        <strain>E24377A / ETEC</strain>
    </source>
</reference>
<name>GRPE_ECO24</name>
<feature type="chain" id="PRO_1000065516" description="Protein GrpE">
    <location>
        <begin position="1"/>
        <end position="196"/>
    </location>
</feature>
<feature type="region of interest" description="Disordered" evidence="2">
    <location>
        <begin position="1"/>
        <end position="39"/>
    </location>
</feature>
<keyword id="KW-0143">Chaperone</keyword>
<keyword id="KW-0963">Cytoplasm</keyword>
<keyword id="KW-1185">Reference proteome</keyword>
<keyword id="KW-0346">Stress response</keyword>
<proteinExistence type="inferred from homology"/>